<name>RS21_XENTR</name>
<organism>
    <name type="scientific">Xenopus tropicalis</name>
    <name type="common">Western clawed frog</name>
    <name type="synonym">Silurana tropicalis</name>
    <dbReference type="NCBI Taxonomy" id="8364"/>
    <lineage>
        <taxon>Eukaryota</taxon>
        <taxon>Metazoa</taxon>
        <taxon>Chordata</taxon>
        <taxon>Craniata</taxon>
        <taxon>Vertebrata</taxon>
        <taxon>Euteleostomi</taxon>
        <taxon>Amphibia</taxon>
        <taxon>Batrachia</taxon>
        <taxon>Anura</taxon>
        <taxon>Pipoidea</taxon>
        <taxon>Pipidae</taxon>
        <taxon>Xenopodinae</taxon>
        <taxon>Xenopus</taxon>
        <taxon>Silurana</taxon>
    </lineage>
</organism>
<keyword id="KW-0963">Cytoplasm</keyword>
<keyword id="KW-0256">Endoplasmic reticulum</keyword>
<keyword id="KW-1185">Reference proteome</keyword>
<keyword id="KW-0687">Ribonucleoprotein</keyword>
<keyword id="KW-0689">Ribosomal protein</keyword>
<dbReference type="EMBL" id="CR848394">
    <property type="protein sequence ID" value="CAJ82836.1"/>
    <property type="molecule type" value="mRNA"/>
</dbReference>
<dbReference type="EMBL" id="BC077662">
    <property type="protein sequence ID" value="AAH77662.1"/>
    <property type="molecule type" value="mRNA"/>
</dbReference>
<dbReference type="RefSeq" id="NP_001005126.1">
    <property type="nucleotide sequence ID" value="NM_001005126.2"/>
</dbReference>
<dbReference type="RefSeq" id="XP_017953199.1">
    <property type="nucleotide sequence ID" value="XM_018097710.1"/>
</dbReference>
<dbReference type="RefSeq" id="XP_017953200.1">
    <property type="nucleotide sequence ID" value="XM_018097711.1"/>
</dbReference>
<dbReference type="SMR" id="Q6DDC6"/>
<dbReference type="FunCoup" id="Q6DDC6">
    <property type="interactions" value="1590"/>
</dbReference>
<dbReference type="STRING" id="8364.ENSXETP00000000801"/>
<dbReference type="PaxDb" id="8364-ENSXETP00000004311"/>
<dbReference type="GeneID" id="448708"/>
<dbReference type="KEGG" id="xtr:448708"/>
<dbReference type="AGR" id="Xenbase:XB-GENE-1007930"/>
<dbReference type="CTD" id="6227"/>
<dbReference type="Xenbase" id="XB-GENE-1007930">
    <property type="gene designation" value="rps21"/>
</dbReference>
<dbReference type="eggNOG" id="KOG3486">
    <property type="taxonomic scope" value="Eukaryota"/>
</dbReference>
<dbReference type="HOGENOM" id="CLU_167122_2_0_1"/>
<dbReference type="InParanoid" id="Q6DDC6"/>
<dbReference type="OMA" id="GESDACM"/>
<dbReference type="OrthoDB" id="9434434at2759"/>
<dbReference type="PhylomeDB" id="Q6DDC6"/>
<dbReference type="TreeFam" id="TF300167"/>
<dbReference type="Reactome" id="R-XTR-156827">
    <property type="pathway name" value="L13a-mediated translational silencing of Ceruloplasmin expression"/>
</dbReference>
<dbReference type="Reactome" id="R-XTR-1799339">
    <property type="pathway name" value="SRP-dependent cotranslational protein targeting to membrane"/>
</dbReference>
<dbReference type="Reactome" id="R-XTR-72689">
    <property type="pathway name" value="Formation of a pool of free 40S subunits"/>
</dbReference>
<dbReference type="Reactome" id="R-XTR-72695">
    <property type="pathway name" value="Formation of the ternary complex, and subsequently, the 43S complex"/>
</dbReference>
<dbReference type="Reactome" id="R-XTR-72702">
    <property type="pathway name" value="Ribosomal scanning and start codon recognition"/>
</dbReference>
<dbReference type="Reactome" id="R-XTR-72706">
    <property type="pathway name" value="GTP hydrolysis and joining of the 60S ribosomal subunit"/>
</dbReference>
<dbReference type="Reactome" id="R-XTR-975956">
    <property type="pathway name" value="Nonsense Mediated Decay (NMD) independent of the Exon Junction Complex (EJC)"/>
</dbReference>
<dbReference type="Reactome" id="R-XTR-975957">
    <property type="pathway name" value="Nonsense Mediated Decay (NMD) enhanced by the Exon Junction Complex (EJC)"/>
</dbReference>
<dbReference type="Proteomes" id="UP000008143">
    <property type="component" value="Chromosome 10"/>
</dbReference>
<dbReference type="Bgee" id="ENSXETG00000002012">
    <property type="expression patterns" value="Expressed in neurula embryo and 12 other cell types or tissues"/>
</dbReference>
<dbReference type="GO" id="GO:0022627">
    <property type="term" value="C:cytosolic small ribosomal subunit"/>
    <property type="evidence" value="ECO:0000250"/>
    <property type="project" value="UniProtKB"/>
</dbReference>
<dbReference type="GO" id="GO:0005791">
    <property type="term" value="C:rough endoplasmic reticulum"/>
    <property type="evidence" value="ECO:0007669"/>
    <property type="project" value="UniProtKB-SubCell"/>
</dbReference>
<dbReference type="GO" id="GO:0003735">
    <property type="term" value="F:structural constituent of ribosome"/>
    <property type="evidence" value="ECO:0007669"/>
    <property type="project" value="InterPro"/>
</dbReference>
<dbReference type="GO" id="GO:0002181">
    <property type="term" value="P:cytoplasmic translation"/>
    <property type="evidence" value="ECO:0000250"/>
    <property type="project" value="UniProtKB"/>
</dbReference>
<dbReference type="FunFam" id="3.30.1230.20:FF:000001">
    <property type="entry name" value="40S ribosomal protein S21"/>
    <property type="match status" value="1"/>
</dbReference>
<dbReference type="Gene3D" id="3.30.1230.20">
    <property type="match status" value="1"/>
</dbReference>
<dbReference type="InterPro" id="IPR001931">
    <property type="entry name" value="Ribosomal_eS21"/>
</dbReference>
<dbReference type="InterPro" id="IPR018279">
    <property type="entry name" value="Ribosomal_eS21_CS"/>
</dbReference>
<dbReference type="InterPro" id="IPR038579">
    <property type="entry name" value="Ribosomal_eS21_sf"/>
</dbReference>
<dbReference type="PANTHER" id="PTHR10442">
    <property type="entry name" value="40S RIBOSOMAL PROTEIN S21"/>
    <property type="match status" value="1"/>
</dbReference>
<dbReference type="Pfam" id="PF01249">
    <property type="entry name" value="Ribosomal_S21e"/>
    <property type="match status" value="1"/>
</dbReference>
<dbReference type="PIRSF" id="PIRSF002148">
    <property type="entry name" value="Ribosomal_S21e"/>
    <property type="match status" value="1"/>
</dbReference>
<dbReference type="PROSITE" id="PS00996">
    <property type="entry name" value="RIBOSOMAL_S21E"/>
    <property type="match status" value="1"/>
</dbReference>
<feature type="chain" id="PRO_0000194737" description="Small ribosomal subunit protein eS21">
    <location>
        <begin position="1"/>
        <end position="83"/>
    </location>
</feature>
<sequence length="83" mass="9243">MQNDAGEFVDLYVPRKCSASNRIIGAKDHASIQINIAEVDKVTGRFNSQYKTYAICGAIRRMGESDDSILRLAKNDCIVSKNF</sequence>
<evidence type="ECO:0000250" key="1">
    <source>
        <dbReference type="UniProtKB" id="P63220"/>
    </source>
</evidence>
<evidence type="ECO:0000250" key="2">
    <source>
        <dbReference type="UniProtKB" id="P63221"/>
    </source>
</evidence>
<evidence type="ECO:0000305" key="3"/>
<accession>Q6DDC6</accession>
<accession>Q28E89</accession>
<protein>
    <recommendedName>
        <fullName evidence="3">Small ribosomal subunit protein eS21</fullName>
    </recommendedName>
    <alternativeName>
        <fullName>40S ribosomal protein S21</fullName>
    </alternativeName>
</protein>
<comment type="function">
    <text evidence="1">Component of the small ribosomal subunit. The ribosome is a large ribonucleoprotein complex responsible for the synthesis of proteins in the cell.</text>
</comment>
<comment type="subunit">
    <text evidence="1">Component of the 40S small ribosomal subunit.</text>
</comment>
<comment type="subcellular location">
    <subcellularLocation>
        <location evidence="1">Cytoplasm</location>
        <location evidence="1">Cytosol</location>
    </subcellularLocation>
    <subcellularLocation>
        <location evidence="1">Cytoplasm</location>
    </subcellularLocation>
    <subcellularLocation>
        <location evidence="2">Rough endoplasmic reticulum</location>
    </subcellularLocation>
    <text evidence="1 2">Detected on cytosolic polysomes (By similarity). Detected in ribosomes that are associated with the rough endoplasmic reticulum (By similarity).</text>
</comment>
<comment type="similarity">
    <text evidence="3">Belongs to the eukaryotic ribosomal protein eS21 family.</text>
</comment>
<reference key="1">
    <citation type="submission" date="2006-03" db="EMBL/GenBank/DDBJ databases">
        <authorList>
            <consortium name="Sanger Xenopus tropicalis EST/cDNA project"/>
        </authorList>
    </citation>
    <scope>NUCLEOTIDE SEQUENCE [LARGE SCALE MRNA]</scope>
    <source>
        <tissue>Neurula</tissue>
    </source>
</reference>
<reference key="2">
    <citation type="submission" date="2004-07" db="EMBL/GenBank/DDBJ databases">
        <authorList>
            <consortium name="NIH - Xenopus Gene Collection (XGC) project"/>
        </authorList>
    </citation>
    <scope>NUCLEOTIDE SEQUENCE [LARGE SCALE MRNA]</scope>
    <source>
        <tissue>Embryo</tissue>
    </source>
</reference>
<gene>
    <name type="primary">rps21</name>
    <name type="ORF">TNeu092k20.1</name>
</gene>
<proteinExistence type="inferred from homology"/>